<reference key="1">
    <citation type="submission" date="2012-12" db="EMBL/GenBank/DDBJ databases">
        <title>The Genome Sequence of Escherichia coli KTE188.</title>
        <authorList>
            <person name="Feldgarden M."/>
            <person name="Nielsen K.L."/>
            <person name="Frimodt-Moller N."/>
            <person name="Andersen P.S."/>
            <person name="Walker B."/>
            <person name="Young S.K."/>
            <person name="Zeng Q."/>
            <person name="Gargeya S."/>
            <person name="Fitzgerald M."/>
            <person name="Haas B."/>
            <person name="Abouelleil A."/>
            <person name="Alvarado L."/>
            <person name="Arachchi H.M."/>
            <person name="Berlin A.M."/>
            <person name="Chapman S.B."/>
            <person name="Dewar J."/>
            <person name="Goldberg J."/>
            <person name="Griggs A."/>
            <person name="Gujja S."/>
            <person name="Hansen M."/>
            <person name="Howarth C."/>
            <person name="Imamovic A."/>
            <person name="Larimer J."/>
            <person name="McCowan C."/>
            <person name="Murphy C."/>
            <person name="Neiman D."/>
            <person name="Pearson M."/>
            <person name="Priest M."/>
            <person name="Roberts A."/>
            <person name="Saif S."/>
            <person name="Shea T."/>
            <person name="Sisk P."/>
            <person name="Sykes S."/>
            <person name="Wortman J."/>
            <person name="Nusbaum C."/>
            <person name="Birren B."/>
        </authorList>
    </citation>
    <scope>NUCLEOTIDE SEQUENCE [LARGE SCALE GENOMIC DNA]</scope>
    <source>
        <strain>KTE188</strain>
    </source>
</reference>
<reference key="2">
    <citation type="journal article" date="2023" name="Cell">
        <title>A conserved family of immune effectors cleaves cellular ATP upon viral infection.</title>
        <authorList>
            <person name="Rousset F."/>
            <person name="Yirmiya E."/>
            <person name="Nesher S."/>
            <person name="Brandis A."/>
            <person name="Mehlman T."/>
            <person name="Itkin M."/>
            <person name="Malitsky S."/>
            <person name="Millman A."/>
            <person name="Melamed S."/>
            <person name="Sorek R."/>
        </authorList>
    </citation>
    <scope>FUNCTION IN VIRAL DEFENSE</scope>
    <source>
        <strain>KTE188</strain>
    </source>
</reference>
<sequence>MSYSSTETSTYTTIDVEAVMRRITADLVMIAASTGAITESKAREYAHDIELLAKNGYLDYVDVTLISNGVEQKATRFHVNESGELANDRPGDARWPRIQGAYLRIVVNNRSTYDQAARQKLSGKMKISWSPCSDDISHSGLTQSGGREYSSNGYGMQRKDYN</sequence>
<protein>
    <recommendedName>
        <fullName evidence="4">CD-NTase-associated protein 7</fullName>
        <shortName evidence="4">Cap7</shortName>
    </recommendedName>
</protein>
<comment type="function">
    <text evidence="1 3 4">Sensor protein of a CBASS antivirus system (By similarity). CBASS (cyclic oligonucleotide-based antiphage signaling system) provides immunity against bacteriophage (PubMed:37595565). The CD-NTase protein synthesizes cyclic nucleotides in response to infection; these serve as specific second messenger signals (PubMed:37595565). The signals activate a diverse range of effectors, leading to bacterial cell death and thus abortive phage infection (PubMed:37595565). A type III CBASS system (PubMed:37595565). Expression of this CBASS system (Cap18-Cap6-Cap7-CdnC-CapW-Cap17) in a susceptible E.coli (strain MG1655) confers resistance to bacteriophage P1 (PubMed:37595565). The sensor protein for this CBASS system. Binds to a closure peptide, which allows it to activate CdnC for second messenger synthesis (By similarity).</text>
</comment>
<comment type="subunit">
    <text evidence="1">Forms complexes with CdnC with 1:1 and 2:2 stoichimetry, and a 1:1:6 CdnC:Cap7:Cap6 complex.</text>
</comment>
<comment type="similarity">
    <text evidence="5">Belongs to the HORMA family. HORMA1 subfamily.</text>
</comment>
<accession>P0DX68</accession>
<dbReference type="EMBL" id="ANTE01000038">
    <property type="protein sequence ID" value="ELC78140.1"/>
    <property type="molecule type" value="Genomic_DNA"/>
</dbReference>
<dbReference type="RefSeq" id="WP_001534690.1">
    <property type="nucleotide sequence ID" value="NZ_KB732426.1"/>
</dbReference>
<dbReference type="SMR" id="P0DX68"/>
<dbReference type="GO" id="GO:0051607">
    <property type="term" value="P:defense response to virus"/>
    <property type="evidence" value="ECO:0007669"/>
    <property type="project" value="UniProtKB-KW"/>
</dbReference>
<dbReference type="InterPro" id="IPR041162">
    <property type="entry name" value="Bact_HORMA_1"/>
</dbReference>
<dbReference type="Pfam" id="PF18138">
    <property type="entry name" value="bacHORMA_1"/>
    <property type="match status" value="1"/>
</dbReference>
<organism>
    <name type="scientific">Escherichia coli (strain KTE188)</name>
    <dbReference type="NCBI Taxonomy" id="1181734"/>
    <lineage>
        <taxon>Bacteria</taxon>
        <taxon>Pseudomonadati</taxon>
        <taxon>Pseudomonadota</taxon>
        <taxon>Gammaproteobacteria</taxon>
        <taxon>Enterobacterales</taxon>
        <taxon>Enterobacteriaceae</taxon>
        <taxon>Escherichia</taxon>
    </lineage>
</organism>
<proteinExistence type="evidence at protein level"/>
<name>CAP7_ECOKT</name>
<keyword id="KW-0051">Antiviral defense</keyword>
<evidence type="ECO:0000250" key="1">
    <source>
        <dbReference type="UniProtKB" id="D7Y2H3"/>
    </source>
</evidence>
<evidence type="ECO:0000256" key="2">
    <source>
        <dbReference type="SAM" id="MobiDB-lite"/>
    </source>
</evidence>
<evidence type="ECO:0000269" key="3">
    <source>
    </source>
</evidence>
<evidence type="ECO:0000303" key="4">
    <source>
    </source>
</evidence>
<evidence type="ECO:0000305" key="5"/>
<evidence type="ECO:0000312" key="6">
    <source>
        <dbReference type="EMBL" id="ELC78140.1"/>
    </source>
</evidence>
<gene>
    <name evidence="4" type="primary">cap7</name>
    <name evidence="6" type="ORF">A13M_04331</name>
</gene>
<feature type="chain" id="PRO_0000459326" description="CD-NTase-associated protein 7">
    <location>
        <begin position="1"/>
        <end position="162"/>
    </location>
</feature>
<feature type="region of interest" description="Disordered" evidence="2">
    <location>
        <begin position="138"/>
        <end position="162"/>
    </location>
</feature>
<feature type="compositionally biased region" description="Polar residues" evidence="2">
    <location>
        <begin position="139"/>
        <end position="154"/>
    </location>
</feature>